<organism>
    <name type="scientific">Mycobacterium tuberculosis (strain CDC 1551 / Oshkosh)</name>
    <dbReference type="NCBI Taxonomy" id="83331"/>
    <lineage>
        <taxon>Bacteria</taxon>
        <taxon>Bacillati</taxon>
        <taxon>Actinomycetota</taxon>
        <taxon>Actinomycetes</taxon>
        <taxon>Mycobacteriales</taxon>
        <taxon>Mycobacteriaceae</taxon>
        <taxon>Mycobacterium</taxon>
        <taxon>Mycobacterium tuberculosis complex</taxon>
    </lineage>
</organism>
<sequence length="429" mass="46124">MTQTLRLTALDEMFITDDIDIVPSVQIEARVSGRFDLDRLAAALRAAVAKHALARARLGRASLTARTLYWEVPDRADHLAVEITDEPVGEVRSRFYARAPELHRSPVFAVAVVRETVGDRLLLNFHHAAFDGMGGLRLLLSLARAYAGEPDEVGGPPIEEARNLKGVAGSRDLFDVLIRARGLAKPAIDRKRTTRVAPDGGSPDGPRFVFAPLTIESDEMATAVARRPEGATVNDLAMAALALTILQWNRTHDVPAADSVSVNMPVNFRPTAWSTEVISNFASYLAIVLRVDEVTDLEKATAIVAGITGPLKQSGAAGWVVDLLEGGKVLPAMLKRQLQLLLPLVEDRFVESVCLSNLGRVDVPAFGGEAGDTTEVWFSPTAAMSVMPIGVGLVGFGGTLRAMFRGDGRTIGGEALGRFAALYRDTLLT</sequence>
<reference key="1">
    <citation type="journal article" date="2002" name="J. Bacteriol.">
        <title>Whole-genome comparison of Mycobacterium tuberculosis clinical and laboratory strains.</title>
        <authorList>
            <person name="Fleischmann R.D."/>
            <person name="Alland D."/>
            <person name="Eisen J.A."/>
            <person name="Carpenter L."/>
            <person name="White O."/>
            <person name="Peterson J.D."/>
            <person name="DeBoy R.T."/>
            <person name="Dodson R.J."/>
            <person name="Gwinn M.L."/>
            <person name="Haft D.H."/>
            <person name="Hickey E.K."/>
            <person name="Kolonay J.F."/>
            <person name="Nelson W.C."/>
            <person name="Umayam L.A."/>
            <person name="Ermolaeva M.D."/>
            <person name="Salzberg S.L."/>
            <person name="Delcher A."/>
            <person name="Utterback T.R."/>
            <person name="Weidman J.F."/>
            <person name="Khouri H.M."/>
            <person name="Gill J."/>
            <person name="Mikula A."/>
            <person name="Bishai W."/>
            <person name="Jacobs W.R. Jr."/>
            <person name="Venter J.C."/>
            <person name="Fraser C.M."/>
        </authorList>
    </citation>
    <scope>NUCLEOTIDE SEQUENCE [LARGE SCALE GENOMIC DNA]</scope>
    <source>
        <strain>CDC 1551 / Oshkosh</strain>
    </source>
</reference>
<feature type="chain" id="PRO_0000427500" description="Uncharacterized protein MT2362">
    <location>
        <begin position="1"/>
        <end position="429"/>
    </location>
</feature>
<name>Y2305_MYCTO</name>
<accession>P9WLD0</accession>
<accession>L0TBX0</accession>
<accession>Q50660</accession>
<protein>
    <recommendedName>
        <fullName>Uncharacterized protein MT2362</fullName>
    </recommendedName>
</protein>
<keyword id="KW-1185">Reference proteome</keyword>
<gene>
    <name type="ordered locus">MT2362</name>
</gene>
<dbReference type="EMBL" id="AE000516">
    <property type="protein sequence ID" value="AAK46648.1"/>
    <property type="molecule type" value="Genomic_DNA"/>
</dbReference>
<dbReference type="PIR" id="E70734">
    <property type="entry name" value="E70734"/>
</dbReference>
<dbReference type="RefSeq" id="WP_003899261.1">
    <property type="nucleotide sequence ID" value="NZ_KK341227.1"/>
</dbReference>
<dbReference type="SMR" id="P9WLD0"/>
<dbReference type="KEGG" id="mtc:MT2362"/>
<dbReference type="PATRIC" id="fig|83331.31.peg.2543"/>
<dbReference type="HOGENOM" id="CLU_032049_0_0_11"/>
<dbReference type="Proteomes" id="UP000001020">
    <property type="component" value="Chromosome"/>
</dbReference>
<dbReference type="Gene3D" id="3.30.559.10">
    <property type="entry name" value="Chloramphenicol acetyltransferase-like domain"/>
    <property type="match status" value="1"/>
</dbReference>
<dbReference type="Gene3D" id="3.30.559.30">
    <property type="entry name" value="Nonribosomal peptide synthetase, condensation domain"/>
    <property type="match status" value="1"/>
</dbReference>
<dbReference type="InterPro" id="IPR023213">
    <property type="entry name" value="CAT-like_dom_sf"/>
</dbReference>
<dbReference type="SUPFAM" id="SSF52777">
    <property type="entry name" value="CoA-dependent acyltransferases"/>
    <property type="match status" value="2"/>
</dbReference>
<proteinExistence type="predicted"/>